<name>NXT1_BOVIN</name>
<accession>Q2KIW0</accession>
<feature type="initiator methionine" description="Removed" evidence="2">
    <location>
        <position position="1"/>
    </location>
</feature>
<feature type="chain" id="PRO_0000247806" description="NTF2-related export protein 1">
    <location>
        <begin position="2"/>
        <end position="140"/>
    </location>
</feature>
<feature type="domain" description="NTF2" evidence="3">
    <location>
        <begin position="16"/>
        <end position="135"/>
    </location>
</feature>
<feature type="modified residue" description="N-acetylalanine" evidence="2">
    <location>
        <position position="2"/>
    </location>
</feature>
<sequence length="140" mass="15832">MASVDFKTYVGQACRAAEEFVNVYYSTMDKRRRLLSRLYMGTATLVWNGNAVSGQESLSEFFEMLPSSEFQINVVDCQPVHDEATPSQTTVLVVICGTVKFEGNKQRDFNQNFILTAQASPSNTVWKIASDCFRFQDWAC</sequence>
<reference key="1">
    <citation type="submission" date="2006-01" db="EMBL/GenBank/DDBJ databases">
        <authorList>
            <consortium name="NIH - Mammalian Gene Collection (MGC) project"/>
        </authorList>
    </citation>
    <scope>NUCLEOTIDE SEQUENCE [LARGE SCALE MRNA]</scope>
    <source>
        <strain>Hereford</strain>
        <tissue>Testis</tissue>
    </source>
</reference>
<organism>
    <name type="scientific">Bos taurus</name>
    <name type="common">Bovine</name>
    <dbReference type="NCBI Taxonomy" id="9913"/>
    <lineage>
        <taxon>Eukaryota</taxon>
        <taxon>Metazoa</taxon>
        <taxon>Chordata</taxon>
        <taxon>Craniata</taxon>
        <taxon>Vertebrata</taxon>
        <taxon>Euteleostomi</taxon>
        <taxon>Mammalia</taxon>
        <taxon>Eutheria</taxon>
        <taxon>Laurasiatheria</taxon>
        <taxon>Artiodactyla</taxon>
        <taxon>Ruminantia</taxon>
        <taxon>Pecora</taxon>
        <taxon>Bovidae</taxon>
        <taxon>Bovinae</taxon>
        <taxon>Bos</taxon>
    </lineage>
</organism>
<proteinExistence type="evidence at transcript level"/>
<dbReference type="EMBL" id="BC112489">
    <property type="protein sequence ID" value="AAI12490.1"/>
    <property type="molecule type" value="mRNA"/>
</dbReference>
<dbReference type="RefSeq" id="NP_001069273.1">
    <property type="nucleotide sequence ID" value="NM_001075805.1"/>
</dbReference>
<dbReference type="SMR" id="Q2KIW0"/>
<dbReference type="FunCoup" id="Q2KIW0">
    <property type="interactions" value="3557"/>
</dbReference>
<dbReference type="STRING" id="9913.ENSBTAP00000006568"/>
<dbReference type="PaxDb" id="9913-ENSBTAP00000006568"/>
<dbReference type="GeneID" id="520351"/>
<dbReference type="KEGG" id="bta:520351"/>
<dbReference type="CTD" id="29107"/>
<dbReference type="eggNOG" id="KOG4353">
    <property type="taxonomic scope" value="Eukaryota"/>
</dbReference>
<dbReference type="InParanoid" id="Q2KIW0"/>
<dbReference type="OrthoDB" id="25408at2759"/>
<dbReference type="Proteomes" id="UP000009136">
    <property type="component" value="Unplaced"/>
</dbReference>
<dbReference type="GO" id="GO:0005737">
    <property type="term" value="C:cytoplasm"/>
    <property type="evidence" value="ECO:0007669"/>
    <property type="project" value="UniProtKB-SubCell"/>
</dbReference>
<dbReference type="GO" id="GO:0044613">
    <property type="term" value="C:nuclear pore central transport channel"/>
    <property type="evidence" value="ECO:0000318"/>
    <property type="project" value="GO_Central"/>
</dbReference>
<dbReference type="GO" id="GO:0016607">
    <property type="term" value="C:nuclear speck"/>
    <property type="evidence" value="ECO:0007669"/>
    <property type="project" value="UniProtKB-SubCell"/>
</dbReference>
<dbReference type="GO" id="GO:0016973">
    <property type="term" value="P:poly(A)+ mRNA export from nucleus"/>
    <property type="evidence" value="ECO:0000318"/>
    <property type="project" value="GO_Central"/>
</dbReference>
<dbReference type="GO" id="GO:0015031">
    <property type="term" value="P:protein transport"/>
    <property type="evidence" value="ECO:0007669"/>
    <property type="project" value="UniProtKB-KW"/>
</dbReference>
<dbReference type="CDD" id="cd00780">
    <property type="entry name" value="NTF2"/>
    <property type="match status" value="1"/>
</dbReference>
<dbReference type="FunFam" id="3.10.450.50:FF:000006">
    <property type="entry name" value="NTF2-related export protein 2 isoform 1"/>
    <property type="match status" value="1"/>
</dbReference>
<dbReference type="Gene3D" id="3.10.450.50">
    <property type="match status" value="1"/>
</dbReference>
<dbReference type="InterPro" id="IPR045875">
    <property type="entry name" value="NTF2"/>
</dbReference>
<dbReference type="InterPro" id="IPR032710">
    <property type="entry name" value="NTF2-like_dom_sf"/>
</dbReference>
<dbReference type="InterPro" id="IPR002075">
    <property type="entry name" value="NTF2_dom"/>
</dbReference>
<dbReference type="InterPro" id="IPR018222">
    <property type="entry name" value="Nuclear_transport_factor_2_euk"/>
</dbReference>
<dbReference type="PANTHER" id="PTHR12612">
    <property type="entry name" value="NUCLEAR TRANSPORT FACTOR 2"/>
    <property type="match status" value="1"/>
</dbReference>
<dbReference type="Pfam" id="PF02136">
    <property type="entry name" value="NTF2"/>
    <property type="match status" value="1"/>
</dbReference>
<dbReference type="SUPFAM" id="SSF54427">
    <property type="entry name" value="NTF2-like"/>
    <property type="match status" value="1"/>
</dbReference>
<dbReference type="PROSITE" id="PS50177">
    <property type="entry name" value="NTF2_DOMAIN"/>
    <property type="match status" value="1"/>
</dbReference>
<gene>
    <name type="primary">NXT1</name>
</gene>
<comment type="function">
    <text evidence="1">Stimulator of protein export for NES-containing proteins. Also plays a role in the nuclear export of U1 snRNA, tRNA, and mRNA. The NXF1-NXT1 heterodimer is involved in the export of HSP70 mRNA in conjunction with ALYREF/THOC4 and THOC5 (By similarity).</text>
</comment>
<comment type="subunit">
    <text evidence="2">Heterodimer with NXF1. Forms a complex with RANGAP1, RANBP2/NUP358 and NXF1. Interacts (via NTF2 domain) with NXF1. Stabilizes the NTF2 domain of NXF1 by heterodimerization. The formation of NXF1-NXT1 heterodimers is required for the NXF1-mediated nuclear mRNA export. Preferentially binds Ran-GTP. Associates with NXF2, NXF3 and NXF5. Does not bind nucleoporins (NPC) directly, its association to NPC is mediated by NXF1.</text>
</comment>
<comment type="subcellular location">
    <subcellularLocation>
        <location evidence="1">Nucleus</location>
    </subcellularLocation>
    <subcellularLocation>
        <location evidence="1">Nucleus speckle</location>
    </subcellularLocation>
    <subcellularLocation>
        <location evidence="1">Cytoplasm</location>
    </subcellularLocation>
    <text evidence="1">Shuttles between the nucleus and the cytoplasm.</text>
</comment>
<evidence type="ECO:0000250" key="1"/>
<evidence type="ECO:0000250" key="2">
    <source>
        <dbReference type="UniProtKB" id="Q9UKK6"/>
    </source>
</evidence>
<evidence type="ECO:0000255" key="3">
    <source>
        <dbReference type="PROSITE-ProRule" id="PRU00137"/>
    </source>
</evidence>
<keyword id="KW-0007">Acetylation</keyword>
<keyword id="KW-0963">Cytoplasm</keyword>
<keyword id="KW-0509">mRNA transport</keyword>
<keyword id="KW-0539">Nucleus</keyword>
<keyword id="KW-0653">Protein transport</keyword>
<keyword id="KW-1185">Reference proteome</keyword>
<keyword id="KW-0813">Transport</keyword>
<protein>
    <recommendedName>
        <fullName>NTF2-related export protein 1</fullName>
    </recommendedName>
</protein>